<protein>
    <recommendedName>
        <fullName>MAP kinase-interacting serine/threonine-protein kinase 1</fullName>
        <ecNumber evidence="4 8">2.7.11.1</ecNumber>
    </recommendedName>
    <alternativeName>
        <fullName>MAP kinase signal-integrating kinase 1</fullName>
        <shortName>MAPK signal-integrating kinase 1</shortName>
        <shortName>Mnk1</shortName>
    </alternativeName>
</protein>
<organism evidence="13">
    <name type="scientific">Homo sapiens</name>
    <name type="common">Human</name>
    <dbReference type="NCBI Taxonomy" id="9606"/>
    <lineage>
        <taxon>Eukaryota</taxon>
        <taxon>Metazoa</taxon>
        <taxon>Chordata</taxon>
        <taxon>Craniata</taxon>
        <taxon>Vertebrata</taxon>
        <taxon>Euteleostomi</taxon>
        <taxon>Mammalia</taxon>
        <taxon>Eutheria</taxon>
        <taxon>Euarchontoglires</taxon>
        <taxon>Primates</taxon>
        <taxon>Haplorrhini</taxon>
        <taxon>Catarrhini</taxon>
        <taxon>Hominidae</taxon>
        <taxon>Homo</taxon>
    </lineage>
</organism>
<gene>
    <name type="primary">MKNK1</name>
    <name type="synonym">MNK1</name>
</gene>
<comment type="function">
    <text evidence="4 6 8 9">May play a role in the response to environmental stress and cytokines. Appears to regulate translation by phosphorylating EIF4E, thus increasing the affinity of this protein for the 7-methylguanosine-containing mRNA cap.</text>
</comment>
<comment type="catalytic activity">
    <reaction evidence="4 8">
        <text>L-seryl-[protein] + ATP = O-phospho-L-seryl-[protein] + ADP + H(+)</text>
        <dbReference type="Rhea" id="RHEA:17989"/>
        <dbReference type="Rhea" id="RHEA-COMP:9863"/>
        <dbReference type="Rhea" id="RHEA-COMP:11604"/>
        <dbReference type="ChEBI" id="CHEBI:15378"/>
        <dbReference type="ChEBI" id="CHEBI:29999"/>
        <dbReference type="ChEBI" id="CHEBI:30616"/>
        <dbReference type="ChEBI" id="CHEBI:83421"/>
        <dbReference type="ChEBI" id="CHEBI:456216"/>
        <dbReference type="EC" id="2.7.11.1"/>
    </reaction>
</comment>
<comment type="catalytic activity">
    <reaction evidence="4 8">
        <text>L-threonyl-[protein] + ATP = O-phospho-L-threonyl-[protein] + ADP + H(+)</text>
        <dbReference type="Rhea" id="RHEA:46608"/>
        <dbReference type="Rhea" id="RHEA-COMP:11060"/>
        <dbReference type="Rhea" id="RHEA-COMP:11605"/>
        <dbReference type="ChEBI" id="CHEBI:15378"/>
        <dbReference type="ChEBI" id="CHEBI:30013"/>
        <dbReference type="ChEBI" id="CHEBI:30616"/>
        <dbReference type="ChEBI" id="CHEBI:61977"/>
        <dbReference type="ChEBI" id="CHEBI:456216"/>
        <dbReference type="EC" id="2.7.11.1"/>
    </reaction>
</comment>
<comment type="cofactor">
    <cofactor evidence="4 8">
        <name>Mg(2+)</name>
        <dbReference type="ChEBI" id="CHEBI:18420"/>
    </cofactor>
</comment>
<comment type="activity regulation">
    <text evidence="8">Phosphorylated and activated by the p38 kinases and kinases in the Erk pathway.</text>
</comment>
<comment type="subunit">
    <text evidence="9">Interacts with the C-terminal regions of EIF4G1 and EIF4G2. Also binds to dephosphorylated ERK1 and ERK2, and to the p38 kinases.</text>
</comment>
<comment type="interaction">
    <interactant intactId="EBI-73837">
        <id>Q9BUB5</id>
    </interactant>
    <interactant intactId="EBI-930964">
        <id>P54253</id>
        <label>ATXN1</label>
    </interactant>
    <organismsDiffer>false</organismsDiffer>
    <experiments>6</experiments>
</comment>
<comment type="interaction">
    <interactant intactId="EBI-73837">
        <id>Q9BUB5</id>
    </interactant>
    <interactant intactId="EBI-12884642">
        <id>Q03060-25</id>
        <label>CREM</label>
    </interactant>
    <organismsDiffer>false</organismsDiffer>
    <experiments>3</experiments>
</comment>
<comment type="interaction">
    <interactant intactId="EBI-73837">
        <id>Q9BUB5</id>
    </interactant>
    <interactant intactId="EBI-466029">
        <id>P42858</id>
        <label>HTT</label>
    </interactant>
    <organismsDiffer>false</organismsDiffer>
    <experiments>18</experiments>
</comment>
<comment type="interaction">
    <interactant intactId="EBI-73837">
        <id>Q9BUB5</id>
    </interactant>
    <interactant intactId="EBI-959949">
        <id>P28482</id>
        <label>MAPK1</label>
    </interactant>
    <organismsDiffer>false</organismsDiffer>
    <experiments>11</experiments>
</comment>
<comment type="interaction">
    <interactant intactId="EBI-73837">
        <id>Q9BUB5</id>
    </interactant>
    <interactant intactId="EBI-73946">
        <id>Q16539</id>
        <label>MAPK14</label>
    </interactant>
    <organismsDiffer>false</organismsDiffer>
    <experiments>7</experiments>
</comment>
<comment type="interaction">
    <interactant intactId="EBI-73837">
        <id>Q9BUB5</id>
    </interactant>
    <interactant intactId="EBI-748974">
        <id>Q96CV9</id>
        <label>OPTN</label>
    </interactant>
    <organismsDiffer>false</organismsDiffer>
    <experiments>3</experiments>
</comment>
<comment type="subcellular location">
    <molecule>Isoform 2</molecule>
    <subcellularLocation>
        <location>Cytoplasm</location>
    </subcellularLocation>
</comment>
<comment type="subcellular location">
    <molecule>Isoform 3</molecule>
    <subcellularLocation>
        <location>Cytoplasm</location>
    </subcellularLocation>
    <subcellularLocation>
        <location>Nucleus</location>
    </subcellularLocation>
</comment>
<comment type="alternative products">
    <event type="alternative splicing"/>
    <isoform>
        <id>Q9BUB5-1</id>
        <name evidence="4">1</name>
        <sequence type="displayed"/>
    </isoform>
    <isoform>
        <id>Q9BUB5-2</id>
        <name evidence="8">2</name>
        <name>MNK1a</name>
        <sequence type="described" ref="VSP_007352"/>
    </isoform>
    <isoform>
        <id>Q9BUB5-3</id>
        <name>3</name>
        <name>MNK1b</name>
        <sequence type="described" ref="VSP_007352 VSP_017515"/>
    </isoform>
</comment>
<comment type="tissue specificity">
    <text evidence="6">Ubiquitous.</text>
</comment>
<comment type="PTM">
    <text evidence="4 5 6 8">Dual phosphorylation of Thr-250 and Thr-255 activates the kinase. Phosphorylation of Thr-385 activates the kinase. MAPK3/ERK1 is one of the kinases which activate MKNK1/MNK1. Phosphorylation by PAK2 leads to a reduced phosphorylation of EIF4G1.</text>
</comment>
<comment type="similarity">
    <text evidence="12">Belongs to the protein kinase superfamily. CAMK Ser/Thr protein kinase family.</text>
</comment>
<feature type="chain" id="PRO_0000086334" description="MAP kinase-interacting serine/threonine-protein kinase 1">
    <location>
        <begin position="1"/>
        <end position="465"/>
    </location>
</feature>
<feature type="domain" description="Protein kinase" evidence="1">
    <location>
        <begin position="49"/>
        <end position="374"/>
    </location>
</feature>
<feature type="region of interest" description="Disordered" evidence="3">
    <location>
        <begin position="1"/>
        <end position="40"/>
    </location>
</feature>
<feature type="region of interest" description="Disordered" evidence="3">
    <location>
        <begin position="185"/>
        <end position="204"/>
    </location>
</feature>
<feature type="region of interest" description="Disordered" evidence="3">
    <location>
        <begin position="446"/>
        <end position="465"/>
    </location>
</feature>
<feature type="compositionally biased region" description="Basic and acidic residues" evidence="3">
    <location>
        <begin position="1"/>
        <end position="11"/>
    </location>
</feature>
<feature type="compositionally biased region" description="Polar residues" evidence="3">
    <location>
        <begin position="185"/>
        <end position="203"/>
    </location>
</feature>
<feature type="compositionally biased region" description="Basic and acidic residues" evidence="3">
    <location>
        <begin position="455"/>
        <end position="465"/>
    </location>
</feature>
<feature type="active site" description="Proton acceptor" evidence="1 2">
    <location>
        <position position="211"/>
    </location>
</feature>
<feature type="binding site" evidence="1">
    <location>
        <begin position="55"/>
        <end position="63"/>
    </location>
    <ligand>
        <name>ATP</name>
        <dbReference type="ChEBI" id="CHEBI:30616"/>
    </ligand>
</feature>
<feature type="binding site" evidence="1 4">
    <location>
        <position position="78"/>
    </location>
    <ligand>
        <name>ATP</name>
        <dbReference type="ChEBI" id="CHEBI:30616"/>
    </ligand>
</feature>
<feature type="modified residue" description="Phosphoserine" evidence="15">
    <location>
        <position position="39"/>
    </location>
</feature>
<feature type="modified residue" description="Phosphoserine" evidence="15">
    <location>
        <position position="221"/>
    </location>
</feature>
<feature type="modified residue" description="Phosphoserine" evidence="15">
    <location>
        <position position="226"/>
    </location>
</feature>
<feature type="modified residue" description="Phosphothreonine" evidence="4">
    <location>
        <position position="250"/>
    </location>
</feature>
<feature type="modified residue" description="Phosphothreonine" evidence="4">
    <location>
        <position position="255"/>
    </location>
</feature>
<feature type="modified residue" description="Phosphothreonine" evidence="4 15">
    <location>
        <position position="385"/>
    </location>
</feature>
<feature type="modified residue" description="Phosphoserine" evidence="14">
    <location>
        <position position="460"/>
    </location>
</feature>
<feature type="splice variant" id="VSP_007352" description="In isoform 2 and isoform 3." evidence="10 11">
    <location>
        <begin position="165"/>
        <end position="205"/>
    </location>
</feature>
<feature type="splice variant" id="VSP_017515" description="In isoform 3." evidence="10">
    <original>QAPEKGLPTPQVLQRNSSTMDLTLFAAEAIALNRQLSQHEENELAEEPEALADGLCSMKLSPPCKSRLARRRALAQAGRGEDRSPPTAL</original>
    <variation>EQQHNGPDALRS</variation>
    <location>
        <begin position="377"/>
        <end position="465"/>
    </location>
</feature>
<feature type="sequence variant" id="VAR_040801" description="In dbSNP:rs56351860." evidence="7">
    <original>K</original>
    <variation>Q</variation>
    <location>
        <position position="49"/>
    </location>
</feature>
<feature type="sequence variant" id="VAR_040802" description="In dbSNP:rs56408722." evidence="7">
    <original>L</original>
    <variation>V</variation>
    <location>
        <position position="158"/>
    </location>
</feature>
<feature type="sequence variant" id="VAR_040803" description="In dbSNP:rs55791614." evidence="7">
    <original>D</original>
    <variation>N</variation>
    <location>
        <position position="308"/>
    </location>
</feature>
<feature type="sequence variant" id="VAR_040804" description="In dbSNP:rs34881418." evidence="7">
    <original>R</original>
    <variation>Q</variation>
    <location>
        <position position="446"/>
    </location>
</feature>
<feature type="mutagenesis site" description="Loss of kinase activity; when associated with D-232." evidence="4">
    <original>K</original>
    <variation>M</variation>
    <location>
        <position position="78"/>
    </location>
</feature>
<feature type="mutagenesis site" description="Loss of kinase activity; when associated with K-78." evidence="4">
    <original>D</original>
    <variation>A</variation>
    <location>
        <position position="232"/>
    </location>
</feature>
<feature type="mutagenesis site" description="Loss of kinase activity; when associated with T-255." evidence="4">
    <original>T</original>
    <variation>A</variation>
    <location>
        <position position="250"/>
    </location>
</feature>
<feature type="mutagenesis site" description="Loss of kinase activity; when associated with T-250." evidence="4">
    <original>T</original>
    <variation>A</variation>
    <location>
        <position position="255"/>
    </location>
</feature>
<feature type="mutagenesis site" description="Constitutively active." evidence="4">
    <original>T</original>
    <variation>D</variation>
    <location>
        <position position="385"/>
    </location>
</feature>
<feature type="helix" evidence="16">
    <location>
        <begin position="44"/>
        <end position="46"/>
    </location>
</feature>
<feature type="strand" evidence="16">
    <location>
        <begin position="48"/>
        <end position="57"/>
    </location>
</feature>
<feature type="strand" evidence="16">
    <location>
        <begin position="59"/>
        <end position="68"/>
    </location>
</feature>
<feature type="turn" evidence="16">
    <location>
        <begin position="69"/>
        <end position="71"/>
    </location>
</feature>
<feature type="strand" evidence="16">
    <location>
        <begin position="74"/>
        <end position="81"/>
    </location>
</feature>
<feature type="helix" evidence="16">
    <location>
        <begin position="87"/>
        <end position="101"/>
    </location>
</feature>
<feature type="strand" evidence="16">
    <location>
        <begin position="110"/>
        <end position="115"/>
    </location>
</feature>
<feature type="strand" evidence="16">
    <location>
        <begin position="117"/>
        <end position="125"/>
    </location>
</feature>
<feature type="helix" evidence="16">
    <location>
        <begin position="132"/>
        <end position="139"/>
    </location>
</feature>
<feature type="helix" evidence="16">
    <location>
        <begin position="144"/>
        <end position="163"/>
    </location>
</feature>
<feature type="helix" evidence="16">
    <location>
        <begin position="214"/>
        <end position="216"/>
    </location>
</feature>
<feature type="strand" evidence="16">
    <location>
        <begin position="217"/>
        <end position="220"/>
    </location>
</feature>
<feature type="strand" evidence="16">
    <location>
        <begin position="227"/>
        <end position="230"/>
    </location>
</feature>
<feature type="strand" evidence="16">
    <location>
        <begin position="271"/>
        <end position="274"/>
    </location>
</feature>
<feature type="helix" evidence="16">
    <location>
        <begin position="277"/>
        <end position="296"/>
    </location>
</feature>
<feature type="helix" evidence="16">
    <location>
        <begin position="337"/>
        <end position="340"/>
    </location>
</feature>
<feature type="strand" evidence="18">
    <location>
        <begin position="341"/>
        <end position="343"/>
    </location>
</feature>
<feature type="helix" evidence="16">
    <location>
        <begin position="345"/>
        <end position="354"/>
    </location>
</feature>
<feature type="turn" evidence="16">
    <location>
        <begin position="359"/>
        <end position="361"/>
    </location>
</feature>
<feature type="helix" evidence="16">
    <location>
        <begin position="365"/>
        <end position="370"/>
    </location>
</feature>
<feature type="turn" evidence="16">
    <location>
        <begin position="372"/>
        <end position="375"/>
    </location>
</feature>
<feature type="helix" evidence="17">
    <location>
        <begin position="439"/>
        <end position="441"/>
    </location>
</feature>
<feature type="helix" evidence="17">
    <location>
        <begin position="443"/>
        <end position="449"/>
    </location>
</feature>
<name>MKNK1_HUMAN</name>
<accession>Q9BUB5</accession>
<accession>D3DQ20</accession>
<accession>D3DQ21</accession>
<accession>O00312</accession>
<accession>Q5TC06</accession>
<accession>Q5TC07</accession>
<accession>Q6V0N6</accession>
<dbReference type="EC" id="2.7.11.1" evidence="4 8"/>
<dbReference type="EMBL" id="AB000409">
    <property type="protein sequence ID" value="BAA19885.1"/>
    <property type="molecule type" value="mRNA"/>
</dbReference>
<dbReference type="EMBL" id="AY355461">
    <property type="protein sequence ID" value="AAQ84219.1"/>
    <property type="molecule type" value="mRNA"/>
</dbReference>
<dbReference type="EMBL" id="AL136373">
    <property type="status" value="NOT_ANNOTATED_CDS"/>
    <property type="molecule type" value="Genomic_DNA"/>
</dbReference>
<dbReference type="EMBL" id="CH471059">
    <property type="protein sequence ID" value="EAX06900.1"/>
    <property type="molecule type" value="Genomic_DNA"/>
</dbReference>
<dbReference type="EMBL" id="CH471059">
    <property type="protein sequence ID" value="EAX06902.1"/>
    <property type="molecule type" value="Genomic_DNA"/>
</dbReference>
<dbReference type="EMBL" id="CH471059">
    <property type="protein sequence ID" value="EAX06904.1"/>
    <property type="molecule type" value="Genomic_DNA"/>
</dbReference>
<dbReference type="EMBL" id="CH471059">
    <property type="protein sequence ID" value="EAX06905.1"/>
    <property type="molecule type" value="Genomic_DNA"/>
</dbReference>
<dbReference type="EMBL" id="BC002755">
    <property type="protein sequence ID" value="AAH02755.1"/>
    <property type="molecule type" value="mRNA"/>
</dbReference>
<dbReference type="RefSeq" id="NP_001129025.1">
    <property type="nucleotide sequence ID" value="NM_001135553.2"/>
</dbReference>
<dbReference type="RefSeq" id="NP_003675.2">
    <property type="nucleotide sequence ID" value="NM_003684.5"/>
</dbReference>
<dbReference type="RefSeq" id="NP_945324.1">
    <property type="nucleotide sequence ID" value="NM_198973.3"/>
</dbReference>
<dbReference type="RefSeq" id="XP_006711063.1">
    <property type="nucleotide sequence ID" value="XM_006711000.1"/>
</dbReference>
<dbReference type="RefSeq" id="XP_016858148.1">
    <property type="nucleotide sequence ID" value="XM_017002659.1"/>
</dbReference>
<dbReference type="RefSeq" id="XP_047288980.1">
    <molecule id="Q9BUB5-2"/>
    <property type="nucleotide sequence ID" value="XM_047433024.1"/>
</dbReference>
<dbReference type="RefSeq" id="XP_047288981.1">
    <molecule id="Q9BUB5-2"/>
    <property type="nucleotide sequence ID" value="XM_047433025.1"/>
</dbReference>
<dbReference type="RefSeq" id="XP_047288982.1">
    <molecule id="Q9BUB5-2"/>
    <property type="nucleotide sequence ID" value="XM_047433026.1"/>
</dbReference>
<dbReference type="RefSeq" id="XP_054195309.1">
    <molecule id="Q9BUB5-2"/>
    <property type="nucleotide sequence ID" value="XM_054339334.1"/>
</dbReference>
<dbReference type="RefSeq" id="XP_054195310.1">
    <molecule id="Q9BUB5-2"/>
    <property type="nucleotide sequence ID" value="XM_054339335.1"/>
</dbReference>
<dbReference type="RefSeq" id="XP_054195311.1">
    <molecule id="Q9BUB5-2"/>
    <property type="nucleotide sequence ID" value="XM_054339336.1"/>
</dbReference>
<dbReference type="PDB" id="2HW6">
    <property type="method" value="X-ray"/>
    <property type="resolution" value="2.50 A"/>
    <property type="chains" value="A/B=37-382"/>
</dbReference>
<dbReference type="PDB" id="2Y9Q">
    <property type="method" value="X-ray"/>
    <property type="resolution" value="1.55 A"/>
    <property type="chains" value="B=434-451"/>
</dbReference>
<dbReference type="PDB" id="5WVD">
    <property type="method" value="X-ray"/>
    <property type="resolution" value="3.00 A"/>
    <property type="chains" value="A/B=37-382"/>
</dbReference>
<dbReference type="PDBsum" id="2HW6"/>
<dbReference type="PDBsum" id="2Y9Q"/>
<dbReference type="PDBsum" id="5WVD"/>
<dbReference type="SMR" id="Q9BUB5"/>
<dbReference type="BioGRID" id="114138">
    <property type="interactions" value="78"/>
</dbReference>
<dbReference type="CORUM" id="Q9BUB5"/>
<dbReference type="ELM" id="Q9BUB5"/>
<dbReference type="FunCoup" id="Q9BUB5">
    <property type="interactions" value="3285"/>
</dbReference>
<dbReference type="IntAct" id="Q9BUB5">
    <property type="interactions" value="72"/>
</dbReference>
<dbReference type="MINT" id="Q9BUB5"/>
<dbReference type="STRING" id="9606.ENSP00000498083"/>
<dbReference type="BindingDB" id="Q9BUB5"/>
<dbReference type="ChEMBL" id="CHEMBL4718"/>
<dbReference type="DrugBank" id="DB12010">
    <property type="generic name" value="Fostamatinib"/>
</dbReference>
<dbReference type="DrugBank" id="DB15219">
    <property type="generic name" value="Tomivosertib"/>
</dbReference>
<dbReference type="DrugCentral" id="Q9BUB5"/>
<dbReference type="GuidetoPHARMACOLOGY" id="2104"/>
<dbReference type="iPTMnet" id="Q9BUB5"/>
<dbReference type="MetOSite" id="Q9BUB5"/>
<dbReference type="PhosphoSitePlus" id="Q9BUB5"/>
<dbReference type="BioMuta" id="MKNK1"/>
<dbReference type="DMDM" id="30316115"/>
<dbReference type="jPOST" id="Q9BUB5"/>
<dbReference type="MassIVE" id="Q9BUB5"/>
<dbReference type="PaxDb" id="9606-ENSP00000361014"/>
<dbReference type="PeptideAtlas" id="Q9BUB5"/>
<dbReference type="ProteomicsDB" id="79072">
    <molecule id="Q9BUB5-1"/>
</dbReference>
<dbReference type="ProteomicsDB" id="79073">
    <molecule id="Q9BUB5-2"/>
</dbReference>
<dbReference type="ProteomicsDB" id="79074">
    <molecule id="Q9BUB5-3"/>
</dbReference>
<dbReference type="Pumba" id="Q9BUB5"/>
<dbReference type="Antibodypedia" id="32808">
    <property type="antibodies" value="578 antibodies from 33 providers"/>
</dbReference>
<dbReference type="DNASU" id="8569"/>
<dbReference type="Ensembl" id="ENST00000649800.1">
    <molecule id="Q9BUB5-1"/>
    <property type="protein sequence ID" value="ENSP00000498083.1"/>
    <property type="gene ID" value="ENSG00000079277.22"/>
</dbReference>
<dbReference type="Ensembl" id="ENST00000650026.1">
    <molecule id="Q9BUB5-3"/>
    <property type="protein sequence ID" value="ENSP00000497380.1"/>
    <property type="gene ID" value="ENSG00000079277.22"/>
</dbReference>
<dbReference type="Ensembl" id="ENST00000650508.1">
    <molecule id="Q9BUB5-2"/>
    <property type="protein sequence ID" value="ENSP00000498143.1"/>
    <property type="gene ID" value="ENSG00000079277.22"/>
</dbReference>
<dbReference type="GeneID" id="8569"/>
<dbReference type="KEGG" id="hsa:8569"/>
<dbReference type="UCSC" id="uc001cqb.5">
    <molecule id="Q9BUB5-1"/>
    <property type="organism name" value="human"/>
</dbReference>
<dbReference type="AGR" id="HGNC:7110"/>
<dbReference type="CTD" id="8569"/>
<dbReference type="DisGeNET" id="8569"/>
<dbReference type="GeneCards" id="MKNK1"/>
<dbReference type="HGNC" id="HGNC:7110">
    <property type="gene designation" value="MKNK1"/>
</dbReference>
<dbReference type="HPA" id="ENSG00000079277">
    <property type="expression patterns" value="Tissue enhanced (pancreas)"/>
</dbReference>
<dbReference type="MalaCards" id="MKNK1"/>
<dbReference type="MIM" id="606724">
    <property type="type" value="gene"/>
</dbReference>
<dbReference type="neXtProt" id="NX_Q9BUB5"/>
<dbReference type="OpenTargets" id="ENSG00000079277"/>
<dbReference type="PharmGKB" id="PA30829"/>
<dbReference type="VEuPathDB" id="HostDB:ENSG00000079277"/>
<dbReference type="eggNOG" id="KOG0607">
    <property type="taxonomic scope" value="Eukaryota"/>
</dbReference>
<dbReference type="GeneTree" id="ENSGT00940000162886"/>
<dbReference type="InParanoid" id="Q9BUB5"/>
<dbReference type="OrthoDB" id="5794026at2759"/>
<dbReference type="PAN-GO" id="Q9BUB5">
    <property type="GO annotations" value="8 GO annotations based on evolutionary models"/>
</dbReference>
<dbReference type="PhylomeDB" id="Q9BUB5"/>
<dbReference type="TreeFam" id="TF314050"/>
<dbReference type="PathwayCommons" id="Q9BUB5"/>
<dbReference type="Reactome" id="R-HSA-1295596">
    <property type="pathway name" value="Spry regulation of FGF signaling"/>
</dbReference>
<dbReference type="SignaLink" id="Q9BUB5"/>
<dbReference type="SIGNOR" id="Q9BUB5"/>
<dbReference type="BioGRID-ORCS" id="8569">
    <property type="hits" value="139 hits in 1194 CRISPR screens"/>
</dbReference>
<dbReference type="CD-CODE" id="8C2F96ED">
    <property type="entry name" value="Centrosome"/>
</dbReference>
<dbReference type="ChiTaRS" id="MKNK1">
    <property type="organism name" value="human"/>
</dbReference>
<dbReference type="EvolutionaryTrace" id="Q9BUB5"/>
<dbReference type="GeneWiki" id="MKNK1"/>
<dbReference type="GenomeRNAi" id="8569"/>
<dbReference type="Pharos" id="Q9BUB5">
    <property type="development level" value="Tchem"/>
</dbReference>
<dbReference type="PRO" id="PR:Q9BUB5"/>
<dbReference type="Proteomes" id="UP000005640">
    <property type="component" value="Chromosome 1"/>
</dbReference>
<dbReference type="RNAct" id="Q9BUB5">
    <property type="molecule type" value="protein"/>
</dbReference>
<dbReference type="Bgee" id="ENSG00000079277">
    <property type="expression patterns" value="Expressed in body of pancreas and 207 other cell types or tissues"/>
</dbReference>
<dbReference type="ExpressionAtlas" id="Q9BUB5">
    <property type="expression patterns" value="baseline and differential"/>
</dbReference>
<dbReference type="GO" id="GO:0005737">
    <property type="term" value="C:cytoplasm"/>
    <property type="evidence" value="ECO:0000318"/>
    <property type="project" value="GO_Central"/>
</dbReference>
<dbReference type="GO" id="GO:0005829">
    <property type="term" value="C:cytosol"/>
    <property type="evidence" value="ECO:0000304"/>
    <property type="project" value="Reactome"/>
</dbReference>
<dbReference type="GO" id="GO:0005654">
    <property type="term" value="C:nucleoplasm"/>
    <property type="evidence" value="ECO:0000314"/>
    <property type="project" value="HPA"/>
</dbReference>
<dbReference type="GO" id="GO:0005634">
    <property type="term" value="C:nucleus"/>
    <property type="evidence" value="ECO:0000318"/>
    <property type="project" value="GO_Central"/>
</dbReference>
<dbReference type="GO" id="GO:0005524">
    <property type="term" value="F:ATP binding"/>
    <property type="evidence" value="ECO:0000314"/>
    <property type="project" value="UniProtKB"/>
</dbReference>
<dbReference type="GO" id="GO:0009931">
    <property type="term" value="F:calcium-dependent protein serine/threonine kinase activity"/>
    <property type="evidence" value="ECO:0000318"/>
    <property type="project" value="GO_Central"/>
</dbReference>
<dbReference type="GO" id="GO:0004683">
    <property type="term" value="F:calcium/calmodulin-dependent protein kinase activity"/>
    <property type="evidence" value="ECO:0000318"/>
    <property type="project" value="GO_Central"/>
</dbReference>
<dbReference type="GO" id="GO:0005516">
    <property type="term" value="F:calmodulin binding"/>
    <property type="evidence" value="ECO:0000318"/>
    <property type="project" value="GO_Central"/>
</dbReference>
<dbReference type="GO" id="GO:0046872">
    <property type="term" value="F:metal ion binding"/>
    <property type="evidence" value="ECO:0007669"/>
    <property type="project" value="UniProtKB-KW"/>
</dbReference>
<dbReference type="GO" id="GO:0106310">
    <property type="term" value="F:protein serine kinase activity"/>
    <property type="evidence" value="ECO:0007669"/>
    <property type="project" value="RHEA"/>
</dbReference>
<dbReference type="GO" id="GO:0004674">
    <property type="term" value="F:protein serine/threonine kinase activity"/>
    <property type="evidence" value="ECO:0000314"/>
    <property type="project" value="UniProtKB"/>
</dbReference>
<dbReference type="GO" id="GO:0035556">
    <property type="term" value="P:intracellular signal transduction"/>
    <property type="evidence" value="ECO:0000314"/>
    <property type="project" value="UniProtKB"/>
</dbReference>
<dbReference type="GO" id="GO:0018105">
    <property type="term" value="P:peptidyl-serine phosphorylation"/>
    <property type="evidence" value="ECO:0000314"/>
    <property type="project" value="BHF-UCL"/>
</dbReference>
<dbReference type="GO" id="GO:0006468">
    <property type="term" value="P:protein phosphorylation"/>
    <property type="evidence" value="ECO:0000314"/>
    <property type="project" value="UniProtKB"/>
</dbReference>
<dbReference type="GO" id="GO:0006417">
    <property type="term" value="P:regulation of translation"/>
    <property type="evidence" value="ECO:0007669"/>
    <property type="project" value="UniProtKB-KW"/>
</dbReference>
<dbReference type="CDD" id="cd14174">
    <property type="entry name" value="STKc_Mnk1"/>
    <property type="match status" value="1"/>
</dbReference>
<dbReference type="FunFam" id="1.10.510.10:FF:000119">
    <property type="entry name" value="Putative map kinase-interacting serine/threonine-protein kinase 1"/>
    <property type="match status" value="1"/>
</dbReference>
<dbReference type="FunFam" id="3.30.200.20:FF:000093">
    <property type="entry name" value="Putative map kinase-interacting serine/threonine-protein kinase 1"/>
    <property type="match status" value="1"/>
</dbReference>
<dbReference type="Gene3D" id="3.30.200.20">
    <property type="entry name" value="Phosphorylase Kinase, domain 1"/>
    <property type="match status" value="1"/>
</dbReference>
<dbReference type="Gene3D" id="1.10.510.10">
    <property type="entry name" value="Transferase(Phosphotransferase) domain 1"/>
    <property type="match status" value="1"/>
</dbReference>
<dbReference type="IDEAL" id="IID00679"/>
<dbReference type="InterPro" id="IPR050205">
    <property type="entry name" value="CDPK_Ser/Thr_kinases"/>
</dbReference>
<dbReference type="InterPro" id="IPR011009">
    <property type="entry name" value="Kinase-like_dom_sf"/>
</dbReference>
<dbReference type="InterPro" id="IPR000719">
    <property type="entry name" value="Prot_kinase_dom"/>
</dbReference>
<dbReference type="InterPro" id="IPR017441">
    <property type="entry name" value="Protein_kinase_ATP_BS"/>
</dbReference>
<dbReference type="InterPro" id="IPR008271">
    <property type="entry name" value="Ser/Thr_kinase_AS"/>
</dbReference>
<dbReference type="PANTHER" id="PTHR24349">
    <property type="entry name" value="SERINE/THREONINE-PROTEIN KINASE"/>
    <property type="match status" value="1"/>
</dbReference>
<dbReference type="Pfam" id="PF00069">
    <property type="entry name" value="Pkinase"/>
    <property type="match status" value="2"/>
</dbReference>
<dbReference type="SMART" id="SM00220">
    <property type="entry name" value="S_TKc"/>
    <property type="match status" value="1"/>
</dbReference>
<dbReference type="SUPFAM" id="SSF56112">
    <property type="entry name" value="Protein kinase-like (PK-like)"/>
    <property type="match status" value="1"/>
</dbReference>
<dbReference type="PROSITE" id="PS00107">
    <property type="entry name" value="PROTEIN_KINASE_ATP"/>
    <property type="match status" value="1"/>
</dbReference>
<dbReference type="PROSITE" id="PS50011">
    <property type="entry name" value="PROTEIN_KINASE_DOM"/>
    <property type="match status" value="1"/>
</dbReference>
<dbReference type="PROSITE" id="PS00108">
    <property type="entry name" value="PROTEIN_KINASE_ST"/>
    <property type="match status" value="1"/>
</dbReference>
<evidence type="ECO:0000255" key="1">
    <source>
        <dbReference type="PROSITE-ProRule" id="PRU00159"/>
    </source>
</evidence>
<evidence type="ECO:0000255" key="2">
    <source>
        <dbReference type="PROSITE-ProRule" id="PRU10027"/>
    </source>
</evidence>
<evidence type="ECO:0000256" key="3">
    <source>
        <dbReference type="SAM" id="MobiDB-lite"/>
    </source>
</evidence>
<evidence type="ECO:0000269" key="4">
    <source>
    </source>
</evidence>
<evidence type="ECO:0000269" key="5">
    <source>
    </source>
</evidence>
<evidence type="ECO:0000269" key="6">
    <source>
    </source>
</evidence>
<evidence type="ECO:0000269" key="7">
    <source>
    </source>
</evidence>
<evidence type="ECO:0000269" key="8">
    <source>
    </source>
</evidence>
<evidence type="ECO:0000269" key="9">
    <source>
    </source>
</evidence>
<evidence type="ECO:0000303" key="10">
    <source>
    </source>
</evidence>
<evidence type="ECO:0000303" key="11">
    <source>
    </source>
</evidence>
<evidence type="ECO:0000305" key="12"/>
<evidence type="ECO:0000312" key="13">
    <source>
        <dbReference type="EMBL" id="AAH02755.1"/>
    </source>
</evidence>
<evidence type="ECO:0007744" key="14">
    <source>
    </source>
</evidence>
<evidence type="ECO:0007744" key="15">
    <source>
    </source>
</evidence>
<evidence type="ECO:0007829" key="16">
    <source>
        <dbReference type="PDB" id="2HW6"/>
    </source>
</evidence>
<evidence type="ECO:0007829" key="17">
    <source>
        <dbReference type="PDB" id="2Y9Q"/>
    </source>
</evidence>
<evidence type="ECO:0007829" key="18">
    <source>
        <dbReference type="PDB" id="5WVD"/>
    </source>
</evidence>
<proteinExistence type="evidence at protein level"/>
<keyword id="KW-0002">3D-structure</keyword>
<keyword id="KW-0025">Alternative splicing</keyword>
<keyword id="KW-0067">ATP-binding</keyword>
<keyword id="KW-0963">Cytoplasm</keyword>
<keyword id="KW-0418">Kinase</keyword>
<keyword id="KW-0460">Magnesium</keyword>
<keyword id="KW-0479">Metal-binding</keyword>
<keyword id="KW-0547">Nucleotide-binding</keyword>
<keyword id="KW-0539">Nucleus</keyword>
<keyword id="KW-0597">Phosphoprotein</keyword>
<keyword id="KW-1267">Proteomics identification</keyword>
<keyword id="KW-1185">Reference proteome</keyword>
<keyword id="KW-0723">Serine/threonine-protein kinase</keyword>
<keyword id="KW-0808">Transferase</keyword>
<keyword id="KW-0810">Translation regulation</keyword>
<sequence length="465" mass="51342">MVSSQKLEKPIEMGSSEPLPIADGDRRRKKKRRGRATDSLPGKFEDMYKLTSELLGEGAYAKVQGAVSLQNGKEYAVKIIEKQAGHSRSRVFREVETLYQCQGNKNILELIEFFEDDTRFYLVFEKLQGGSILAHIQKQKHFNEREASRVVRDVAAALDFLHTKDKVSLCHLGWSAMAPSGLTAAPTSLGSSDPPTSASQVAGTTGIAHRDLKPENILCESPEKVSPVKICDFDLGSGMKLNNSCTPITTPELTTPCGSAEYMAPEVVEVFTDQATFYDKRCDLWSLGVVLYIMLSGYPPFVGHCGADCGWDRGEVCRVCQNKLFESIQEGKYEFPDKDWAHISSEAKDLISKLLVRDAKQRLSAAQVLQHPWVQGQAPEKGLPTPQVLQRNSSTMDLTLFAAEAIALNRQLSQHEENELAEEPEALADGLCSMKLSPPCKSRLARRRALAQAGRGEDRSPPTAL</sequence>
<reference evidence="12" key="1">
    <citation type="journal article" date="1997" name="EMBO J.">
        <title>MNK1, a new MAP kinase-activated protein kinase, isolated by a novel expression screening method for identifying protein kinase substrates.</title>
        <authorList>
            <person name="Fukunaga R."/>
            <person name="Hunter T."/>
        </authorList>
    </citation>
    <scope>NUCLEOTIDE SEQUENCE [MRNA] (ISOFORM 2)</scope>
    <scope>FUNCTION</scope>
    <scope>CATALYTIC ACTIVITY</scope>
    <scope>COFACTOR</scope>
    <scope>PHOSPHORYLATION BY MAPK3/ERK1</scope>
    <scope>ACTIVITY REGULATION</scope>
    <source>
        <tissue>Cervix carcinoma</tissue>
    </source>
</reference>
<reference evidence="12" key="2">
    <citation type="journal article" date="2001" name="Mol. Cell. Biol.">
        <title>Negative regulation of protein translation by mitogen-activated protein kinase-interacting kinases 1 and 2.</title>
        <authorList>
            <person name="Knauf U."/>
            <person name="Tschopp C."/>
            <person name="Gram H."/>
        </authorList>
    </citation>
    <scope>NUCLEOTIDE SEQUENCE [MRNA] (ISOFORM 1)</scope>
    <scope>FUNCTION</scope>
    <scope>CATALYTIC ACTIVITY</scope>
    <scope>COFACTOR</scope>
    <scope>PHOSPHORYLATION AT THR-250; THR-255 AND THR-385</scope>
    <scope>MUTAGENESIS OF LYS-78; ASP-232; THR-250; THR-255 AND THR-385</scope>
    <source>
        <tissue>T-cell</tissue>
    </source>
</reference>
<reference key="3">
    <citation type="journal article" date="2004" name="Exp. Cell Res.">
        <title>Identification and molecular characterization of Mnk1b, a splice variant of human MAP kinase-interacting kinase Mnk1.</title>
        <authorList>
            <person name="O'Loghlen A."/>
            <person name="Gonzalez V.M."/>
            <person name="Pineiro D."/>
            <person name="Perez-Morgado M.I."/>
            <person name="Salinas M."/>
            <person name="Martin M.E."/>
        </authorList>
    </citation>
    <scope>NUCLEOTIDE SEQUENCE [MRNA] (ISOFORM 3)</scope>
    <scope>FUNCTION</scope>
    <scope>TISSUE SPECIFICITY</scope>
    <scope>PHOSPHORYLATION</scope>
    <scope>SUBCELLULAR LOCATION</scope>
</reference>
<reference key="4">
    <citation type="journal article" date="2006" name="Nature">
        <title>The DNA sequence and biological annotation of human chromosome 1.</title>
        <authorList>
            <person name="Gregory S.G."/>
            <person name="Barlow K.F."/>
            <person name="McLay K.E."/>
            <person name="Kaul R."/>
            <person name="Swarbreck D."/>
            <person name="Dunham A."/>
            <person name="Scott C.E."/>
            <person name="Howe K.L."/>
            <person name="Woodfine K."/>
            <person name="Spencer C.C.A."/>
            <person name="Jones M.C."/>
            <person name="Gillson C."/>
            <person name="Searle S."/>
            <person name="Zhou Y."/>
            <person name="Kokocinski F."/>
            <person name="McDonald L."/>
            <person name="Evans R."/>
            <person name="Phillips K."/>
            <person name="Atkinson A."/>
            <person name="Cooper R."/>
            <person name="Jones C."/>
            <person name="Hall R.E."/>
            <person name="Andrews T.D."/>
            <person name="Lloyd C."/>
            <person name="Ainscough R."/>
            <person name="Almeida J.P."/>
            <person name="Ambrose K.D."/>
            <person name="Anderson F."/>
            <person name="Andrew R.W."/>
            <person name="Ashwell R.I.S."/>
            <person name="Aubin K."/>
            <person name="Babbage A.K."/>
            <person name="Bagguley C.L."/>
            <person name="Bailey J."/>
            <person name="Beasley H."/>
            <person name="Bethel G."/>
            <person name="Bird C.P."/>
            <person name="Bray-Allen S."/>
            <person name="Brown J.Y."/>
            <person name="Brown A.J."/>
            <person name="Buckley D."/>
            <person name="Burton J."/>
            <person name="Bye J."/>
            <person name="Carder C."/>
            <person name="Chapman J.C."/>
            <person name="Clark S.Y."/>
            <person name="Clarke G."/>
            <person name="Clee C."/>
            <person name="Cobley V."/>
            <person name="Collier R.E."/>
            <person name="Corby N."/>
            <person name="Coville G.J."/>
            <person name="Davies J."/>
            <person name="Deadman R."/>
            <person name="Dunn M."/>
            <person name="Earthrowl M."/>
            <person name="Ellington A.G."/>
            <person name="Errington H."/>
            <person name="Frankish A."/>
            <person name="Frankland J."/>
            <person name="French L."/>
            <person name="Garner P."/>
            <person name="Garnett J."/>
            <person name="Gay L."/>
            <person name="Ghori M.R.J."/>
            <person name="Gibson R."/>
            <person name="Gilby L.M."/>
            <person name="Gillett W."/>
            <person name="Glithero R.J."/>
            <person name="Grafham D.V."/>
            <person name="Griffiths C."/>
            <person name="Griffiths-Jones S."/>
            <person name="Grocock R."/>
            <person name="Hammond S."/>
            <person name="Harrison E.S.I."/>
            <person name="Hart E."/>
            <person name="Haugen E."/>
            <person name="Heath P.D."/>
            <person name="Holmes S."/>
            <person name="Holt K."/>
            <person name="Howden P.J."/>
            <person name="Hunt A.R."/>
            <person name="Hunt S.E."/>
            <person name="Hunter G."/>
            <person name="Isherwood J."/>
            <person name="James R."/>
            <person name="Johnson C."/>
            <person name="Johnson D."/>
            <person name="Joy A."/>
            <person name="Kay M."/>
            <person name="Kershaw J.K."/>
            <person name="Kibukawa M."/>
            <person name="Kimberley A.M."/>
            <person name="King A."/>
            <person name="Knights A.J."/>
            <person name="Lad H."/>
            <person name="Laird G."/>
            <person name="Lawlor S."/>
            <person name="Leongamornlert D.A."/>
            <person name="Lloyd D.M."/>
            <person name="Loveland J."/>
            <person name="Lovell J."/>
            <person name="Lush M.J."/>
            <person name="Lyne R."/>
            <person name="Martin S."/>
            <person name="Mashreghi-Mohammadi M."/>
            <person name="Matthews L."/>
            <person name="Matthews N.S.W."/>
            <person name="McLaren S."/>
            <person name="Milne S."/>
            <person name="Mistry S."/>
            <person name="Moore M.J.F."/>
            <person name="Nickerson T."/>
            <person name="O'Dell C.N."/>
            <person name="Oliver K."/>
            <person name="Palmeiri A."/>
            <person name="Palmer S.A."/>
            <person name="Parker A."/>
            <person name="Patel D."/>
            <person name="Pearce A.V."/>
            <person name="Peck A.I."/>
            <person name="Pelan S."/>
            <person name="Phelps K."/>
            <person name="Phillimore B.J."/>
            <person name="Plumb R."/>
            <person name="Rajan J."/>
            <person name="Raymond C."/>
            <person name="Rouse G."/>
            <person name="Saenphimmachak C."/>
            <person name="Sehra H.K."/>
            <person name="Sheridan E."/>
            <person name="Shownkeen R."/>
            <person name="Sims S."/>
            <person name="Skuce C.D."/>
            <person name="Smith M."/>
            <person name="Steward C."/>
            <person name="Subramanian S."/>
            <person name="Sycamore N."/>
            <person name="Tracey A."/>
            <person name="Tromans A."/>
            <person name="Van Helmond Z."/>
            <person name="Wall M."/>
            <person name="Wallis J.M."/>
            <person name="White S."/>
            <person name="Whitehead S.L."/>
            <person name="Wilkinson J.E."/>
            <person name="Willey D.L."/>
            <person name="Williams H."/>
            <person name="Wilming L."/>
            <person name="Wray P.W."/>
            <person name="Wu Z."/>
            <person name="Coulson A."/>
            <person name="Vaudin M."/>
            <person name="Sulston J.E."/>
            <person name="Durbin R.M."/>
            <person name="Hubbard T."/>
            <person name="Wooster R."/>
            <person name="Dunham I."/>
            <person name="Carter N.P."/>
            <person name="McVean G."/>
            <person name="Ross M.T."/>
            <person name="Harrow J."/>
            <person name="Olson M.V."/>
            <person name="Beck S."/>
            <person name="Rogers J."/>
            <person name="Bentley D.R."/>
        </authorList>
    </citation>
    <scope>NUCLEOTIDE SEQUENCE [LARGE SCALE GENOMIC DNA]</scope>
</reference>
<reference key="5">
    <citation type="submission" date="2005-09" db="EMBL/GenBank/DDBJ databases">
        <authorList>
            <person name="Mural R.J."/>
            <person name="Istrail S."/>
            <person name="Sutton G.G."/>
            <person name="Florea L."/>
            <person name="Halpern A.L."/>
            <person name="Mobarry C.M."/>
            <person name="Lippert R."/>
            <person name="Walenz B."/>
            <person name="Shatkay H."/>
            <person name="Dew I."/>
            <person name="Miller J.R."/>
            <person name="Flanigan M.J."/>
            <person name="Edwards N.J."/>
            <person name="Bolanos R."/>
            <person name="Fasulo D."/>
            <person name="Halldorsson B.V."/>
            <person name="Hannenhalli S."/>
            <person name="Turner R."/>
            <person name="Yooseph S."/>
            <person name="Lu F."/>
            <person name="Nusskern D.R."/>
            <person name="Shue B.C."/>
            <person name="Zheng X.H."/>
            <person name="Zhong F."/>
            <person name="Delcher A.L."/>
            <person name="Huson D.H."/>
            <person name="Kravitz S.A."/>
            <person name="Mouchard L."/>
            <person name="Reinert K."/>
            <person name="Remington K.A."/>
            <person name="Clark A.G."/>
            <person name="Waterman M.S."/>
            <person name="Eichler E.E."/>
            <person name="Adams M.D."/>
            <person name="Hunkapiller M.W."/>
            <person name="Myers E.W."/>
            <person name="Venter J.C."/>
        </authorList>
    </citation>
    <scope>NUCLEOTIDE SEQUENCE [LARGE SCALE GENOMIC DNA]</scope>
</reference>
<reference evidence="12" key="6">
    <citation type="journal article" date="2004" name="Genome Res.">
        <title>The status, quality, and expansion of the NIH full-length cDNA project: the Mammalian Gene Collection (MGC).</title>
        <authorList>
            <consortium name="The MGC Project Team"/>
        </authorList>
    </citation>
    <scope>NUCLEOTIDE SEQUENCE [LARGE SCALE MRNA] (ISOFORM 1)</scope>
    <source>
        <tissue>Placenta</tissue>
    </source>
</reference>
<reference evidence="12" key="7">
    <citation type="journal article" date="1999" name="EMBO J.">
        <title>Human eukaryotic translation initiation factor 4G (eIF4G) recruits mnk1 to phosphorylate eIF4E.</title>
        <authorList>
            <person name="Pyronnet S."/>
            <person name="Imataka H."/>
            <person name="Gingras A.-C."/>
            <person name="Fukunaga R."/>
            <person name="Hunter T."/>
            <person name="Sonenberg N."/>
        </authorList>
    </citation>
    <scope>FUNCTION</scope>
    <scope>INTERACTION WITH EIF4G1 AND EIF4G2</scope>
</reference>
<reference key="8">
    <citation type="journal article" date="2004" name="J. Biol. Chem.">
        <title>Phosphorylation of Mnk1 by caspase-activated Pak2/gamma-PAK inhibits phosphorylation and interaction of eIF4G with Mnk.</title>
        <authorList>
            <person name="Orton K.C."/>
            <person name="Ling J."/>
            <person name="Waskiewicz A.J."/>
            <person name="Cooper J.A."/>
            <person name="Merrick W.C."/>
            <person name="Korneeva N.L."/>
            <person name="Rhoads R.E."/>
            <person name="Sonenberg N."/>
            <person name="Traugh J.A."/>
        </authorList>
    </citation>
    <scope>PHOSPHORYLATION BY PAK2</scope>
</reference>
<reference key="9">
    <citation type="journal article" date="2008" name="Proc. Natl. Acad. Sci. U.S.A.">
        <title>A quantitative atlas of mitotic phosphorylation.</title>
        <authorList>
            <person name="Dephoure N."/>
            <person name="Zhou C."/>
            <person name="Villen J."/>
            <person name="Beausoleil S.A."/>
            <person name="Bakalarski C.E."/>
            <person name="Elledge S.J."/>
            <person name="Gygi S.P."/>
        </authorList>
    </citation>
    <scope>PHOSPHORYLATION [LARGE SCALE ANALYSIS] AT SER-460</scope>
    <scope>IDENTIFICATION BY MASS SPECTROMETRY [LARGE SCALE ANALYSIS]</scope>
    <source>
        <tissue>Cervix carcinoma</tissue>
    </source>
</reference>
<reference key="10">
    <citation type="journal article" date="2013" name="J. Proteome Res.">
        <title>Toward a comprehensive characterization of a human cancer cell phosphoproteome.</title>
        <authorList>
            <person name="Zhou H."/>
            <person name="Di Palma S."/>
            <person name="Preisinger C."/>
            <person name="Peng M."/>
            <person name="Polat A.N."/>
            <person name="Heck A.J."/>
            <person name="Mohammed S."/>
        </authorList>
    </citation>
    <scope>PHOSPHORYLATION [LARGE SCALE ANALYSIS] AT SER-39; SER-221; SER-226 AND THR-385</scope>
    <scope>IDENTIFICATION BY MASS SPECTROMETRY [LARGE SCALE ANALYSIS]</scope>
    <source>
        <tissue>Cervix carcinoma</tissue>
        <tissue>Erythroleukemia</tissue>
    </source>
</reference>
<reference key="11">
    <citation type="journal article" date="2007" name="Nature">
        <title>Patterns of somatic mutation in human cancer genomes.</title>
        <authorList>
            <person name="Greenman C."/>
            <person name="Stephens P."/>
            <person name="Smith R."/>
            <person name="Dalgliesh G.L."/>
            <person name="Hunter C."/>
            <person name="Bignell G."/>
            <person name="Davies H."/>
            <person name="Teague J."/>
            <person name="Butler A."/>
            <person name="Stevens C."/>
            <person name="Edkins S."/>
            <person name="O'Meara S."/>
            <person name="Vastrik I."/>
            <person name="Schmidt E.E."/>
            <person name="Avis T."/>
            <person name="Barthorpe S."/>
            <person name="Bhamra G."/>
            <person name="Buck G."/>
            <person name="Choudhury B."/>
            <person name="Clements J."/>
            <person name="Cole J."/>
            <person name="Dicks E."/>
            <person name="Forbes S."/>
            <person name="Gray K."/>
            <person name="Halliday K."/>
            <person name="Harrison R."/>
            <person name="Hills K."/>
            <person name="Hinton J."/>
            <person name="Jenkinson A."/>
            <person name="Jones D."/>
            <person name="Menzies A."/>
            <person name="Mironenko T."/>
            <person name="Perry J."/>
            <person name="Raine K."/>
            <person name="Richardson D."/>
            <person name="Shepherd R."/>
            <person name="Small A."/>
            <person name="Tofts C."/>
            <person name="Varian J."/>
            <person name="Webb T."/>
            <person name="West S."/>
            <person name="Widaa S."/>
            <person name="Yates A."/>
            <person name="Cahill D.P."/>
            <person name="Louis D.N."/>
            <person name="Goldstraw P."/>
            <person name="Nicholson A.G."/>
            <person name="Brasseur F."/>
            <person name="Looijenga L."/>
            <person name="Weber B.L."/>
            <person name="Chiew Y.-E."/>
            <person name="DeFazio A."/>
            <person name="Greaves M.F."/>
            <person name="Green A.R."/>
            <person name="Campbell P."/>
            <person name="Birney E."/>
            <person name="Easton D.F."/>
            <person name="Chenevix-Trench G."/>
            <person name="Tan M.-H."/>
            <person name="Khoo S.K."/>
            <person name="Teh B.T."/>
            <person name="Yuen S.T."/>
            <person name="Leung S.Y."/>
            <person name="Wooster R."/>
            <person name="Futreal P.A."/>
            <person name="Stratton M.R."/>
        </authorList>
    </citation>
    <scope>VARIANTS [LARGE SCALE ANALYSIS] GLN-49; VAL-158; ASN-308 AND GLN-446</scope>
</reference>